<proteinExistence type="inferred from homology"/>
<name>RL20_WOLTR</name>
<accession>Q5GRX9</accession>
<evidence type="ECO:0000255" key="1">
    <source>
        <dbReference type="HAMAP-Rule" id="MF_00382"/>
    </source>
</evidence>
<evidence type="ECO:0000305" key="2"/>
<gene>
    <name evidence="1" type="primary">rplT</name>
    <name type="ordered locus">Wbm0657</name>
</gene>
<protein>
    <recommendedName>
        <fullName evidence="1">Large ribosomal subunit protein bL20</fullName>
    </recommendedName>
    <alternativeName>
        <fullName evidence="2">50S ribosomal protein L20</fullName>
    </alternativeName>
</protein>
<organism>
    <name type="scientific">Wolbachia sp. subsp. Brugia malayi (strain TRS)</name>
    <dbReference type="NCBI Taxonomy" id="292805"/>
    <lineage>
        <taxon>Bacteria</taxon>
        <taxon>Pseudomonadati</taxon>
        <taxon>Pseudomonadota</taxon>
        <taxon>Alphaproteobacteria</taxon>
        <taxon>Rickettsiales</taxon>
        <taxon>Anaplasmataceae</taxon>
        <taxon>Wolbachieae</taxon>
        <taxon>Wolbachia</taxon>
    </lineage>
</organism>
<feature type="chain" id="PRO_0000243757" description="Large ribosomal subunit protein bL20">
    <location>
        <begin position="1"/>
        <end position="121"/>
    </location>
</feature>
<dbReference type="EMBL" id="AE017321">
    <property type="protein sequence ID" value="AAW71245.1"/>
    <property type="molecule type" value="Genomic_DNA"/>
</dbReference>
<dbReference type="RefSeq" id="WP_011256855.1">
    <property type="nucleotide sequence ID" value="NC_006833.1"/>
</dbReference>
<dbReference type="SMR" id="Q5GRX9"/>
<dbReference type="STRING" id="292805.Wbm0657"/>
<dbReference type="KEGG" id="wbm:Wbm0657"/>
<dbReference type="eggNOG" id="COG0292">
    <property type="taxonomic scope" value="Bacteria"/>
</dbReference>
<dbReference type="HOGENOM" id="CLU_123265_0_1_5"/>
<dbReference type="Proteomes" id="UP000000534">
    <property type="component" value="Chromosome"/>
</dbReference>
<dbReference type="GO" id="GO:1990904">
    <property type="term" value="C:ribonucleoprotein complex"/>
    <property type="evidence" value="ECO:0007669"/>
    <property type="project" value="UniProtKB-KW"/>
</dbReference>
<dbReference type="GO" id="GO:0005840">
    <property type="term" value="C:ribosome"/>
    <property type="evidence" value="ECO:0007669"/>
    <property type="project" value="UniProtKB-KW"/>
</dbReference>
<dbReference type="GO" id="GO:0019843">
    <property type="term" value="F:rRNA binding"/>
    <property type="evidence" value="ECO:0007669"/>
    <property type="project" value="UniProtKB-UniRule"/>
</dbReference>
<dbReference type="GO" id="GO:0003735">
    <property type="term" value="F:structural constituent of ribosome"/>
    <property type="evidence" value="ECO:0007669"/>
    <property type="project" value="InterPro"/>
</dbReference>
<dbReference type="GO" id="GO:0000027">
    <property type="term" value="P:ribosomal large subunit assembly"/>
    <property type="evidence" value="ECO:0007669"/>
    <property type="project" value="UniProtKB-UniRule"/>
</dbReference>
<dbReference type="GO" id="GO:0006412">
    <property type="term" value="P:translation"/>
    <property type="evidence" value="ECO:0007669"/>
    <property type="project" value="InterPro"/>
</dbReference>
<dbReference type="CDD" id="cd07026">
    <property type="entry name" value="Ribosomal_L20"/>
    <property type="match status" value="1"/>
</dbReference>
<dbReference type="FunFam" id="1.10.1900.20:FF:000001">
    <property type="entry name" value="50S ribosomal protein L20"/>
    <property type="match status" value="1"/>
</dbReference>
<dbReference type="Gene3D" id="6.10.160.10">
    <property type="match status" value="1"/>
</dbReference>
<dbReference type="Gene3D" id="1.10.1900.20">
    <property type="entry name" value="Ribosomal protein L20"/>
    <property type="match status" value="1"/>
</dbReference>
<dbReference type="HAMAP" id="MF_00382">
    <property type="entry name" value="Ribosomal_bL20"/>
    <property type="match status" value="1"/>
</dbReference>
<dbReference type="InterPro" id="IPR005813">
    <property type="entry name" value="Ribosomal_bL20"/>
</dbReference>
<dbReference type="InterPro" id="IPR049946">
    <property type="entry name" value="RIBOSOMAL_L20_CS"/>
</dbReference>
<dbReference type="InterPro" id="IPR035566">
    <property type="entry name" value="Ribosomal_protein_bL20_C"/>
</dbReference>
<dbReference type="NCBIfam" id="TIGR01032">
    <property type="entry name" value="rplT_bact"/>
    <property type="match status" value="1"/>
</dbReference>
<dbReference type="PANTHER" id="PTHR10986">
    <property type="entry name" value="39S RIBOSOMAL PROTEIN L20"/>
    <property type="match status" value="1"/>
</dbReference>
<dbReference type="Pfam" id="PF00453">
    <property type="entry name" value="Ribosomal_L20"/>
    <property type="match status" value="1"/>
</dbReference>
<dbReference type="PRINTS" id="PR00062">
    <property type="entry name" value="RIBOSOMALL20"/>
</dbReference>
<dbReference type="SUPFAM" id="SSF74731">
    <property type="entry name" value="Ribosomal protein L20"/>
    <property type="match status" value="1"/>
</dbReference>
<dbReference type="PROSITE" id="PS00937">
    <property type="entry name" value="RIBOSOMAL_L20"/>
    <property type="match status" value="1"/>
</dbReference>
<reference key="1">
    <citation type="journal article" date="2005" name="PLoS Biol.">
        <title>The Wolbachia genome of Brugia malayi: endosymbiont evolution within a human pathogenic nematode.</title>
        <authorList>
            <person name="Foster J."/>
            <person name="Ganatra M."/>
            <person name="Kamal I."/>
            <person name="Ware J."/>
            <person name="Makarova K."/>
            <person name="Ivanova N."/>
            <person name="Bhattacharyya A."/>
            <person name="Kapatral V."/>
            <person name="Kumar S."/>
            <person name="Posfai J."/>
            <person name="Vincze T."/>
            <person name="Ingram J."/>
            <person name="Moran L."/>
            <person name="Lapidus A."/>
            <person name="Omelchenko M."/>
            <person name="Kyrpides N."/>
            <person name="Ghedin E."/>
            <person name="Wang S."/>
            <person name="Goltsman E."/>
            <person name="Joukov V."/>
            <person name="Ostrovskaya O."/>
            <person name="Tsukerman K."/>
            <person name="Mazur M."/>
            <person name="Comb D."/>
            <person name="Koonin E."/>
            <person name="Slatko B."/>
        </authorList>
    </citation>
    <scope>NUCLEOTIDE SEQUENCE [LARGE SCALE GENOMIC DNA]</scope>
    <source>
        <strain>TRS</strain>
    </source>
</reference>
<sequence length="121" mass="14006">MARVKRGVTTHARHKKILNLAKGYRGRAKSCYRIALQRVEKALQYAYRDRRNRKRDFRSLWIIRINAAAREHGLTYGRFMHGLALAGVDLNRKILAEMAVNYKDDFTKLAETVSSKLAENS</sequence>
<keyword id="KW-1185">Reference proteome</keyword>
<keyword id="KW-0687">Ribonucleoprotein</keyword>
<keyword id="KW-0689">Ribosomal protein</keyword>
<keyword id="KW-0694">RNA-binding</keyword>
<keyword id="KW-0699">rRNA-binding</keyword>
<comment type="function">
    <text evidence="1">Binds directly to 23S ribosomal RNA and is necessary for the in vitro assembly process of the 50S ribosomal subunit. It is not involved in the protein synthesizing functions of that subunit.</text>
</comment>
<comment type="similarity">
    <text evidence="1">Belongs to the bacterial ribosomal protein bL20 family.</text>
</comment>